<protein>
    <recommendedName>
        <fullName evidence="4">Putrescine N-hydroxylase</fullName>
        <ecNumber evidence="1 2">1.14.13.252</ecNumber>
    </recommendedName>
    <alternativeName>
        <fullName evidence="4">N-hydroxylating monooxygenase</fullName>
    </alternativeName>
</protein>
<proteinExistence type="evidence at protein level"/>
<dbReference type="EC" id="1.14.13.252" evidence="1 2"/>
<dbReference type="EMBL" id="CP000521">
    <property type="protein sequence ID" value="ABO12989.2"/>
    <property type="molecule type" value="Genomic_DNA"/>
</dbReference>
<dbReference type="RefSeq" id="WP_001088061.1">
    <property type="nucleotide sequence ID" value="NZ_CP053098.1"/>
</dbReference>
<dbReference type="PDB" id="7US3">
    <property type="method" value="X-ray"/>
    <property type="resolution" value="2.20 A"/>
    <property type="chains" value="A/B/C/D=1-446"/>
</dbReference>
<dbReference type="PDBsum" id="7US3"/>
<dbReference type="SMR" id="P0DXB2"/>
<dbReference type="KEGG" id="acb:A1S_2572"/>
<dbReference type="GO" id="GO:0004497">
    <property type="term" value="F:monooxygenase activity"/>
    <property type="evidence" value="ECO:0007669"/>
    <property type="project" value="UniProtKB-KW"/>
</dbReference>
<dbReference type="GO" id="GO:0009058">
    <property type="term" value="P:biosynthetic process"/>
    <property type="evidence" value="ECO:0007669"/>
    <property type="project" value="UniProtKB-ARBA"/>
</dbReference>
<dbReference type="Gene3D" id="3.50.50.60">
    <property type="entry name" value="FAD/NAD(P)-binding domain"/>
    <property type="match status" value="1"/>
</dbReference>
<dbReference type="InterPro" id="IPR036188">
    <property type="entry name" value="FAD/NAD-bd_sf"/>
</dbReference>
<dbReference type="InterPro" id="IPR025700">
    <property type="entry name" value="Lys/Orn_oxygenase"/>
</dbReference>
<dbReference type="PANTHER" id="PTHR42802:SF1">
    <property type="entry name" value="L-ORNITHINE N(5)-MONOOXYGENASE"/>
    <property type="match status" value="1"/>
</dbReference>
<dbReference type="PANTHER" id="PTHR42802">
    <property type="entry name" value="MONOOXYGENASE"/>
    <property type="match status" value="1"/>
</dbReference>
<dbReference type="Pfam" id="PF13434">
    <property type="entry name" value="Lys_Orn_oxgnase"/>
    <property type="match status" value="1"/>
</dbReference>
<dbReference type="SUPFAM" id="SSF51905">
    <property type="entry name" value="FAD/NAD(P)-binding domain"/>
    <property type="match status" value="1"/>
</dbReference>
<reference key="1">
    <citation type="journal article" date="2007" name="Genes Dev.">
        <title>New insights into Acinetobacter baumannii pathogenesis revealed by high-density pyrosequencing and transposon mutagenesis.</title>
        <authorList>
            <person name="Smith M.G."/>
            <person name="Gianoulis T.A."/>
            <person name="Pukatzki S."/>
            <person name="Mekalanos J.J."/>
            <person name="Ornston L.N."/>
            <person name="Gerstein M."/>
            <person name="Snyder M."/>
        </authorList>
    </citation>
    <scope>NUCLEOTIDE SEQUENCE [LARGE SCALE GENOMIC DNA]</scope>
    <source>
        <strain>ATCC 17978 / DSM 105126 / CIP 53.77 / LMG 1025 / NCDC KC755 / 5377</strain>
    </source>
</reference>
<reference key="2">
    <citation type="journal article" date="2022" name="ACS Chem. Biol.">
        <title>In Vitro Reconstitution of Fimsbactin Biosynthesis from Acinetobacter baumannii.</title>
        <authorList>
            <person name="Yang J."/>
            <person name="Wencewicz T.A."/>
        </authorList>
    </citation>
    <scope>FUNCTION</scope>
    <scope>CATALYTIC ACTIVITY</scope>
    <scope>PATHWAY</scope>
    <source>
        <strain>ATCC 17978 / DSM 105126 / CIP 53.77 / LMG 1025 / NCDC KC755 / 5377</strain>
    </source>
</reference>
<reference evidence="7" key="3">
    <citation type="journal article" date="2022" name="Biochemistry">
        <title>Kinetic and Structural Characterization of a Flavin-Dependent Putrescine N-Hydroxylase from Acinetobacter baumannii.</title>
        <authorList>
            <person name="Lyons N.S."/>
            <person name="Bogner A.N."/>
            <person name="Tanner J.J."/>
            <person name="Sobrado P."/>
        </authorList>
    </citation>
    <scope>X-RAY CRYSTALLOGRAPHY (2.20 ANGSTROMS) IN COMPLEX WITH FAD AND NADP(+)</scope>
    <scope>FUNCTION</scope>
    <scope>CATALYTIC ACTIVITY</scope>
    <scope>PROPOSED REACTION MECHANISM</scope>
    <scope>COFACTOR</scope>
    <scope>BIOPHYSICOCHEMICAL PROPERTIES</scope>
    <scope>PATHWAY</scope>
    <scope>SUBUNIT</scope>
    <scope>DOMAIN</scope>
    <source>
        <strain>ATCC 17978 / DSM 105126 / CIP 53.77 / LMG 1025 / NCDC KC755 / 5377</strain>
    </source>
</reference>
<sequence>MNSQHIYDIVGIGVGPFNLGLACLTQPLNELSTIFFDSKDEFDWHSGIMPEGSTLQIPFIADLVSFADPKNNYSFLNYLKLHNRLYQFFIRESFFILRAEYNLYCKWAAEQLENVHFKSFVERIDYDESRQLYTVRVKQPQGEMKVVTKNLVLGTGTTPITPKFCQGYPEQIQSSADYLRHKKDYLTKKSITIVGGGQSGAEIYYDLLSEIDQHGYQLNWLTKAPHFFSMDLGKLTLEYTSPDYTSHFYSLDEDKRDQVIGSQNALYKGIELSFVNRIYDLLYQKSLHQPIPTRMMPNCALDAVEQQSNHLNLTFKNSDINKRFKLESEVLILALGYEYKIPECLTPIRTLINWDSKGRIALNWNYSINDDNTIFAQNIGIYSHGFTVPDLGMGCYRNAIIINTILGREVYPVEKRIAYQEFAPTTEEIVTPVKTTAKSHSTELSF</sequence>
<keyword id="KW-0002">3D-structure</keyword>
<keyword id="KW-0274">FAD</keyword>
<keyword id="KW-0285">Flavoprotein</keyword>
<keyword id="KW-0503">Monooxygenase</keyword>
<keyword id="KW-0521">NADP</keyword>
<keyword id="KW-0560">Oxidoreductase</keyword>
<accession>P0DXB2</accession>
<evidence type="ECO:0000269" key="1">
    <source>
    </source>
</evidence>
<evidence type="ECO:0000269" key="2">
    <source>
    </source>
</evidence>
<evidence type="ECO:0000303" key="3">
    <source>
    </source>
</evidence>
<evidence type="ECO:0000303" key="4">
    <source>
    </source>
</evidence>
<evidence type="ECO:0000305" key="5"/>
<evidence type="ECO:0000312" key="6">
    <source>
        <dbReference type="EMBL" id="ABO12989.2"/>
    </source>
</evidence>
<evidence type="ECO:0007744" key="7">
    <source>
        <dbReference type="PDB" id="7US3"/>
    </source>
</evidence>
<evidence type="ECO:0007829" key="8">
    <source>
        <dbReference type="PDB" id="7US3"/>
    </source>
</evidence>
<gene>
    <name evidence="3" type="primary">fbsI</name>
    <name evidence="6" type="ordered locus">A1S_2572</name>
</gene>
<name>PUTNH_ACIBT</name>
<comment type="function">
    <text evidence="1 2">N-hydroxylating monooxygenase involved in the biosynthesis of fimsbactin A, the major siderophore produced by A.baumannii (PubMed:36122366, PubMed:36314559). Catalyzes the N-hydroxylation of the aliphatic diamine putrescine into N-hydroxyputrescine (NHP) (PubMed:36122366, PubMed:36314559). Putrescine is the preferred substrate, but the enzyme can also catalyze the N-hydroxylation of cadaverine, with 4-fold lower catalytic efficiency (PubMed:36314559). Cannot use lysine or ornithine as substrates (PubMed:36314559). Uses both NADPH and NADH as the reducing cofactor with a preference for NADPH (PubMed:36122366, PubMed:36314559).</text>
</comment>
<comment type="catalytic activity">
    <reaction evidence="1 2">
        <text>putrescine + NADPH + O2 = N-hydroxyputrescine + NADP(+) + H2O</text>
        <dbReference type="Rhea" id="RHEA:78815"/>
        <dbReference type="ChEBI" id="CHEBI:15377"/>
        <dbReference type="ChEBI" id="CHEBI:15379"/>
        <dbReference type="ChEBI" id="CHEBI:57783"/>
        <dbReference type="ChEBI" id="CHEBI:58349"/>
        <dbReference type="ChEBI" id="CHEBI:180909"/>
        <dbReference type="ChEBI" id="CHEBI:326268"/>
        <dbReference type="EC" id="1.14.13.252"/>
    </reaction>
    <physiologicalReaction direction="left-to-right" evidence="1 2">
        <dbReference type="Rhea" id="RHEA:78816"/>
    </physiologicalReaction>
</comment>
<comment type="cofactor">
    <cofactor evidence="2">
        <name>FAD</name>
        <dbReference type="ChEBI" id="CHEBI:57692"/>
    </cofactor>
</comment>
<comment type="biophysicochemical properties">
    <kinetics>
        <KM evidence="2">3 uM for putrescine (in the presence of NADPH)</KM>
        <KM evidence="2">9 uM for cadaverine (in the presence of NADPH)</KM>
        <KM evidence="2">60 uM for NADPH (in the presence of putrescine)</KM>
        <KM evidence="2">55 uM for NADH (in the presence of putrescine)</KM>
        <text evidence="2">kcat is 0.60 sec(-1) with putrescine as substrate (in the presence of NADPH). kcat is 0.54 sec(-1) with cadaverine as substrate (in the presence of NADPH). kcat is 0.70 sec(-1) with NADPH as substrate (in the presence of putrescine). kcat is 0.30 sec(-1) with NADH (in the presence of putrescine).</text>
    </kinetics>
</comment>
<comment type="pathway">
    <text evidence="1 2">Siderophore biosynthesis.</text>
</comment>
<comment type="subunit">
    <text evidence="2">Homotetramer.</text>
</comment>
<comment type="domain">
    <text evidence="2">Contains an N-terminal Rossmann-like domain that binds FAD and a C-terminal domain that binds NADP(+) (PubMed:36314559). The smaller third domain consists of three alpha-helices (residues 70-114) and is involved in oligomerization (PubMed:36314559).</text>
</comment>
<comment type="similarity">
    <text evidence="5">Belongs to the lysine N(6)-hydroxylase/L-ornithine N(5)-oxygenase family.</text>
</comment>
<organism>
    <name type="scientific">Acinetobacter baumannii (strain ATCC 17978 / DSM 105126 / CIP 53.77 / LMG 1025 / NCDC KC755 / 5377)</name>
    <dbReference type="NCBI Taxonomy" id="400667"/>
    <lineage>
        <taxon>Bacteria</taxon>
        <taxon>Pseudomonadati</taxon>
        <taxon>Pseudomonadota</taxon>
        <taxon>Gammaproteobacteria</taxon>
        <taxon>Moraxellales</taxon>
        <taxon>Moraxellaceae</taxon>
        <taxon>Acinetobacter</taxon>
        <taxon>Acinetobacter calcoaceticus/baumannii complex</taxon>
    </lineage>
</organism>
<feature type="chain" id="PRO_0000460754" description="Putrescine N-hydroxylase">
    <location>
        <begin position="1"/>
        <end position="446"/>
    </location>
</feature>
<feature type="binding site" evidence="2 7">
    <location>
        <position position="17"/>
    </location>
    <ligand>
        <name>FAD</name>
        <dbReference type="ChEBI" id="CHEBI:57692"/>
    </ligand>
</feature>
<feature type="binding site" evidence="2 7">
    <location>
        <position position="37"/>
    </location>
    <ligand>
        <name>FAD</name>
        <dbReference type="ChEBI" id="CHEBI:57692"/>
    </ligand>
</feature>
<feature type="binding site" evidence="2 7">
    <location>
        <position position="38"/>
    </location>
    <ligand>
        <name>FAD</name>
        <dbReference type="ChEBI" id="CHEBI:57692"/>
    </ligand>
</feature>
<feature type="binding site" evidence="2 7">
    <location>
        <position position="39"/>
    </location>
    <ligand>
        <name>FAD</name>
        <dbReference type="ChEBI" id="CHEBI:57692"/>
    </ligand>
</feature>
<feature type="binding site" evidence="2 7">
    <location>
        <position position="44"/>
    </location>
    <ligand>
        <name>FAD</name>
        <dbReference type="ChEBI" id="CHEBI:57692"/>
    </ligand>
</feature>
<feature type="binding site" evidence="2 7">
    <location>
        <position position="45"/>
    </location>
    <ligand>
        <name>FAD</name>
        <dbReference type="ChEBI" id="CHEBI:57692"/>
    </ligand>
</feature>
<feature type="binding site" evidence="2 7">
    <location>
        <position position="54"/>
    </location>
    <ligand>
        <name>NADP(+)</name>
        <dbReference type="ChEBI" id="CHEBI:58349"/>
    </ligand>
</feature>
<feature type="binding site" evidence="2 7">
    <location>
        <position position="56"/>
    </location>
    <ligand>
        <name>FAD</name>
        <dbReference type="ChEBI" id="CHEBI:57692"/>
    </ligand>
</feature>
<feature type="binding site" evidence="2 7">
    <location>
        <position position="56"/>
    </location>
    <ligand>
        <name>NADP(+)</name>
        <dbReference type="ChEBI" id="CHEBI:58349"/>
    </ligand>
</feature>
<feature type="binding site" evidence="2 7">
    <location>
        <position position="98"/>
    </location>
    <ligand>
        <name>NADP(+)</name>
        <dbReference type="ChEBI" id="CHEBI:58349"/>
    </ligand>
</feature>
<feature type="binding site" evidence="2 7">
    <location>
        <position position="121"/>
    </location>
    <ligand>
        <name>FAD</name>
        <dbReference type="ChEBI" id="CHEBI:57692"/>
    </ligand>
</feature>
<feature type="binding site" evidence="2 7">
    <location>
        <position position="199"/>
    </location>
    <ligand>
        <name>NADP(+)</name>
        <dbReference type="ChEBI" id="CHEBI:58349"/>
    </ligand>
</feature>
<feature type="binding site" evidence="2 7">
    <location>
        <position position="223"/>
    </location>
    <ligand>
        <name>NADP(+)</name>
        <dbReference type="ChEBI" id="CHEBI:58349"/>
    </ligand>
</feature>
<feature type="binding site" evidence="2 7">
    <location>
        <position position="267"/>
    </location>
    <ligand>
        <name>NADP(+)</name>
        <dbReference type="ChEBI" id="CHEBI:58349"/>
    </ligand>
</feature>
<feature type="binding site" evidence="2 7">
    <location>
        <position position="301"/>
    </location>
    <ligand>
        <name>NADP(+)</name>
        <dbReference type="ChEBI" id="CHEBI:58349"/>
    </ligand>
</feature>
<feature type="binding site" evidence="2 7">
    <location>
        <position position="378"/>
    </location>
    <ligand>
        <name>FAD</name>
        <dbReference type="ChEBI" id="CHEBI:57692"/>
    </ligand>
</feature>
<feature type="binding site" evidence="2 7">
    <location>
        <position position="389"/>
    </location>
    <ligand>
        <name>FAD</name>
        <dbReference type="ChEBI" id="CHEBI:57692"/>
    </ligand>
</feature>
<feature type="binding site" evidence="2 7">
    <location>
        <position position="391"/>
    </location>
    <ligand>
        <name>FAD</name>
        <dbReference type="ChEBI" id="CHEBI:57692"/>
    </ligand>
</feature>
<feature type="strand" evidence="8">
    <location>
        <begin position="6"/>
        <end position="12"/>
    </location>
</feature>
<feature type="helix" evidence="8">
    <location>
        <begin position="16"/>
        <end position="25"/>
    </location>
</feature>
<feature type="strand" evidence="8">
    <location>
        <begin position="33"/>
        <end position="36"/>
    </location>
</feature>
<feature type="strand" evidence="8">
    <location>
        <begin position="38"/>
        <end position="41"/>
    </location>
</feature>
<feature type="helix" evidence="8">
    <location>
        <begin position="46"/>
        <end position="48"/>
    </location>
</feature>
<feature type="strand" evidence="8">
    <location>
        <begin position="61"/>
        <end position="64"/>
    </location>
</feature>
<feature type="turn" evidence="8">
    <location>
        <begin position="65"/>
        <end position="67"/>
    </location>
</feature>
<feature type="helix" evidence="8">
    <location>
        <begin position="75"/>
        <end position="81"/>
    </location>
</feature>
<feature type="helix" evidence="8">
    <location>
        <begin position="85"/>
        <end position="91"/>
    </location>
</feature>
<feature type="helix" evidence="8">
    <location>
        <begin position="98"/>
        <end position="111"/>
    </location>
</feature>
<feature type="strand" evidence="8">
    <location>
        <begin position="115"/>
        <end position="118"/>
    </location>
</feature>
<feature type="strand" evidence="8">
    <location>
        <begin position="120"/>
        <end position="127"/>
    </location>
</feature>
<feature type="turn" evidence="8">
    <location>
        <begin position="128"/>
        <end position="131"/>
    </location>
</feature>
<feature type="strand" evidence="8">
    <location>
        <begin position="132"/>
        <end position="138"/>
    </location>
</feature>
<feature type="strand" evidence="8">
    <location>
        <begin position="143"/>
        <end position="153"/>
    </location>
</feature>
<feature type="helix" evidence="8">
    <location>
        <begin position="163"/>
        <end position="165"/>
    </location>
</feature>
<feature type="turn" evidence="8">
    <location>
        <begin position="169"/>
        <end position="171"/>
    </location>
</feature>
<feature type="strand" evidence="8">
    <location>
        <begin position="172"/>
        <end position="174"/>
    </location>
</feature>
<feature type="helix" evidence="8">
    <location>
        <begin position="175"/>
        <end position="177"/>
    </location>
</feature>
<feature type="helix" evidence="8">
    <location>
        <begin position="178"/>
        <end position="185"/>
    </location>
</feature>
<feature type="strand" evidence="8">
    <location>
        <begin position="189"/>
        <end position="194"/>
    </location>
</feature>
<feature type="helix" evidence="8">
    <location>
        <begin position="198"/>
        <end position="209"/>
    </location>
</feature>
<feature type="helix" evidence="8">
    <location>
        <begin position="210"/>
        <end position="213"/>
    </location>
</feature>
<feature type="strand" evidence="8">
    <location>
        <begin position="217"/>
        <end position="221"/>
    </location>
</feature>
<feature type="strand" evidence="8">
    <location>
        <begin position="223"/>
        <end position="226"/>
    </location>
</feature>
<feature type="helix" evidence="8">
    <location>
        <begin position="234"/>
        <end position="237"/>
    </location>
</feature>
<feature type="helix" evidence="8">
    <location>
        <begin position="242"/>
        <end position="249"/>
    </location>
</feature>
<feature type="helix" evidence="8">
    <location>
        <begin position="253"/>
        <end position="261"/>
    </location>
</feature>
<feature type="helix" evidence="8">
    <location>
        <begin position="264"/>
        <end position="267"/>
    </location>
</feature>
<feature type="strand" evidence="8">
    <location>
        <begin position="268"/>
        <end position="270"/>
    </location>
</feature>
<feature type="helix" evidence="8">
    <location>
        <begin position="272"/>
        <end position="285"/>
    </location>
</feature>
<feature type="strand" evidence="8">
    <location>
        <begin position="287"/>
        <end position="289"/>
    </location>
</feature>
<feature type="strand" evidence="8">
    <location>
        <begin position="292"/>
        <end position="306"/>
    </location>
</feature>
<feature type="strand" evidence="8">
    <location>
        <begin position="308"/>
        <end position="317"/>
    </location>
</feature>
<feature type="turn" evidence="8">
    <location>
        <begin position="318"/>
        <end position="321"/>
    </location>
</feature>
<feature type="strand" evidence="8">
    <location>
        <begin position="322"/>
        <end position="333"/>
    </location>
</feature>
<feature type="helix" evidence="8">
    <location>
        <begin position="343"/>
        <end position="351"/>
    </location>
</feature>
<feature type="strand" evidence="8">
    <location>
        <begin position="358"/>
        <end position="360"/>
    </location>
</feature>
<feature type="strand" evidence="8">
    <location>
        <begin position="374"/>
        <end position="378"/>
    </location>
</feature>
<feature type="helix" evidence="8">
    <location>
        <begin position="381"/>
        <end position="384"/>
    </location>
</feature>
<feature type="turn" evidence="8">
    <location>
        <begin position="386"/>
        <end position="389"/>
    </location>
</feature>
<feature type="helix" evidence="8">
    <location>
        <begin position="391"/>
        <end position="393"/>
    </location>
</feature>
<feature type="helix" evidence="8">
    <location>
        <begin position="394"/>
        <end position="406"/>
    </location>
</feature>
<feature type="helix" evidence="8">
    <location>
        <begin position="426"/>
        <end position="428"/>
    </location>
</feature>